<dbReference type="EC" id="7.1.1.-"/>
<dbReference type="EMBL" id="AL123456">
    <property type="protein sequence ID" value="CCP45961.1"/>
    <property type="molecule type" value="Genomic_DNA"/>
</dbReference>
<dbReference type="PIR" id="G70647">
    <property type="entry name" value="G70647"/>
</dbReference>
<dbReference type="RefSeq" id="NP_217666.1">
    <property type="nucleotide sequence ID" value="NC_000962.3"/>
</dbReference>
<dbReference type="RefSeq" id="WP_003416439.1">
    <property type="nucleotide sequence ID" value="NZ_NVQJ01000019.1"/>
</dbReference>
<dbReference type="SMR" id="P9WIV7"/>
<dbReference type="FunCoup" id="P9WIV7">
    <property type="interactions" value="487"/>
</dbReference>
<dbReference type="STRING" id="83332.Rv3150"/>
<dbReference type="PaxDb" id="83332-Rv3150"/>
<dbReference type="DNASU" id="888854"/>
<dbReference type="GeneID" id="45427137"/>
<dbReference type="GeneID" id="888854"/>
<dbReference type="KEGG" id="mtu:Rv3150"/>
<dbReference type="KEGG" id="mtv:RVBD_3150"/>
<dbReference type="TubercuList" id="Rv3150"/>
<dbReference type="eggNOG" id="COG1894">
    <property type="taxonomic scope" value="Bacteria"/>
</dbReference>
<dbReference type="InParanoid" id="P9WIV7"/>
<dbReference type="OrthoDB" id="9805533at2"/>
<dbReference type="PhylomeDB" id="P9WIV7"/>
<dbReference type="Proteomes" id="UP000001584">
    <property type="component" value="Chromosome"/>
</dbReference>
<dbReference type="GO" id="GO:0045271">
    <property type="term" value="C:respiratory chain complex I"/>
    <property type="evidence" value="ECO:0000318"/>
    <property type="project" value="GO_Central"/>
</dbReference>
<dbReference type="GO" id="GO:0051539">
    <property type="term" value="F:4 iron, 4 sulfur cluster binding"/>
    <property type="evidence" value="ECO:0007669"/>
    <property type="project" value="UniProtKB-KW"/>
</dbReference>
<dbReference type="GO" id="GO:0010181">
    <property type="term" value="F:FMN binding"/>
    <property type="evidence" value="ECO:0007669"/>
    <property type="project" value="InterPro"/>
</dbReference>
<dbReference type="GO" id="GO:0046872">
    <property type="term" value="F:metal ion binding"/>
    <property type="evidence" value="ECO:0007669"/>
    <property type="project" value="UniProtKB-KW"/>
</dbReference>
<dbReference type="GO" id="GO:0051287">
    <property type="term" value="F:NAD binding"/>
    <property type="evidence" value="ECO:0007669"/>
    <property type="project" value="InterPro"/>
</dbReference>
<dbReference type="GO" id="GO:0008137">
    <property type="term" value="F:NADH dehydrogenase (ubiquinone) activity"/>
    <property type="evidence" value="ECO:0007669"/>
    <property type="project" value="InterPro"/>
</dbReference>
<dbReference type="GO" id="GO:0048038">
    <property type="term" value="F:quinone binding"/>
    <property type="evidence" value="ECO:0007669"/>
    <property type="project" value="UniProtKB-KW"/>
</dbReference>
<dbReference type="GO" id="GO:0045333">
    <property type="term" value="P:cellular respiration"/>
    <property type="evidence" value="ECO:0000318"/>
    <property type="project" value="GO_Central"/>
</dbReference>
<dbReference type="FunFam" id="1.20.1440.230:FF:000001">
    <property type="entry name" value="Mitochondrial NADH dehydrogenase flavoprotein 1"/>
    <property type="match status" value="1"/>
</dbReference>
<dbReference type="FunFam" id="3.40.50.11540:FF:000001">
    <property type="entry name" value="NADH dehydrogenase [ubiquinone] flavoprotein 1, mitochondrial"/>
    <property type="match status" value="1"/>
</dbReference>
<dbReference type="FunFam" id="3.10.20.600:FF:000003">
    <property type="entry name" value="NADH-quinone oxidoreductase subunit F"/>
    <property type="match status" value="1"/>
</dbReference>
<dbReference type="Gene3D" id="3.10.20.600">
    <property type="match status" value="1"/>
</dbReference>
<dbReference type="Gene3D" id="6.10.250.1450">
    <property type="match status" value="1"/>
</dbReference>
<dbReference type="Gene3D" id="3.40.50.11540">
    <property type="entry name" value="NADH-ubiquinone oxidoreductase 51kDa subunit"/>
    <property type="match status" value="1"/>
</dbReference>
<dbReference type="Gene3D" id="1.20.1440.230">
    <property type="entry name" value="NADH-ubiquinone oxidoreductase 51kDa subunit, iron-sulphur binding domain"/>
    <property type="match status" value="1"/>
</dbReference>
<dbReference type="InterPro" id="IPR050837">
    <property type="entry name" value="ComplexI_51kDa_subunit"/>
</dbReference>
<dbReference type="InterPro" id="IPR001949">
    <property type="entry name" value="NADH-UbQ_OxRdtase_51kDa_CS"/>
</dbReference>
<dbReference type="InterPro" id="IPR011537">
    <property type="entry name" value="NADH-UbQ_OxRdtase_suF"/>
</dbReference>
<dbReference type="InterPro" id="IPR011538">
    <property type="entry name" value="Nuo51_FMN-bd"/>
</dbReference>
<dbReference type="InterPro" id="IPR037225">
    <property type="entry name" value="Nuo51_FMN-bd_sf"/>
</dbReference>
<dbReference type="InterPro" id="IPR019575">
    <property type="entry name" value="Nuop51_4Fe4S-bd"/>
</dbReference>
<dbReference type="InterPro" id="IPR037207">
    <property type="entry name" value="Nuop51_4Fe4S-bd_sf"/>
</dbReference>
<dbReference type="InterPro" id="IPR019554">
    <property type="entry name" value="Soluble_ligand-bd"/>
</dbReference>
<dbReference type="NCBIfam" id="TIGR01959">
    <property type="entry name" value="nuoF_fam"/>
    <property type="match status" value="1"/>
</dbReference>
<dbReference type="NCBIfam" id="NF010120">
    <property type="entry name" value="PRK13596.1"/>
    <property type="match status" value="1"/>
</dbReference>
<dbReference type="PANTHER" id="PTHR11780:SF10">
    <property type="entry name" value="NADH DEHYDROGENASE [UBIQUINONE] FLAVOPROTEIN 1, MITOCHONDRIAL"/>
    <property type="match status" value="1"/>
</dbReference>
<dbReference type="PANTHER" id="PTHR11780">
    <property type="entry name" value="NADH-UBIQUINONE OXIDOREDUCTASE FLAVOPROTEIN 1 NDUFV1"/>
    <property type="match status" value="1"/>
</dbReference>
<dbReference type="Pfam" id="PF01512">
    <property type="entry name" value="Complex1_51K"/>
    <property type="match status" value="1"/>
</dbReference>
<dbReference type="Pfam" id="PF10589">
    <property type="entry name" value="NADH_4Fe-4S"/>
    <property type="match status" value="1"/>
</dbReference>
<dbReference type="Pfam" id="PF10531">
    <property type="entry name" value="SLBB"/>
    <property type="match status" value="1"/>
</dbReference>
<dbReference type="SMART" id="SM00928">
    <property type="entry name" value="NADH_4Fe-4S"/>
    <property type="match status" value="1"/>
</dbReference>
<dbReference type="SUPFAM" id="SSF142019">
    <property type="entry name" value="Nqo1 FMN-binding domain-like"/>
    <property type="match status" value="1"/>
</dbReference>
<dbReference type="SUPFAM" id="SSF142984">
    <property type="entry name" value="Nqo1 middle domain-like"/>
    <property type="match status" value="1"/>
</dbReference>
<dbReference type="SUPFAM" id="SSF140490">
    <property type="entry name" value="Nqo1C-terminal domain-like"/>
    <property type="match status" value="1"/>
</dbReference>
<dbReference type="PROSITE" id="PS00644">
    <property type="entry name" value="COMPLEX1_51K_1"/>
    <property type="match status" value="1"/>
</dbReference>
<dbReference type="PROSITE" id="PS00645">
    <property type="entry name" value="COMPLEX1_51K_2"/>
    <property type="match status" value="1"/>
</dbReference>
<reference key="1">
    <citation type="journal article" date="1998" name="Nature">
        <title>Deciphering the biology of Mycobacterium tuberculosis from the complete genome sequence.</title>
        <authorList>
            <person name="Cole S.T."/>
            <person name="Brosch R."/>
            <person name="Parkhill J."/>
            <person name="Garnier T."/>
            <person name="Churcher C.M."/>
            <person name="Harris D.E."/>
            <person name="Gordon S.V."/>
            <person name="Eiglmeier K."/>
            <person name="Gas S."/>
            <person name="Barry C.E. III"/>
            <person name="Tekaia F."/>
            <person name="Badcock K."/>
            <person name="Basham D."/>
            <person name="Brown D."/>
            <person name="Chillingworth T."/>
            <person name="Connor R."/>
            <person name="Davies R.M."/>
            <person name="Devlin K."/>
            <person name="Feltwell T."/>
            <person name="Gentles S."/>
            <person name="Hamlin N."/>
            <person name="Holroyd S."/>
            <person name="Hornsby T."/>
            <person name="Jagels K."/>
            <person name="Krogh A."/>
            <person name="McLean J."/>
            <person name="Moule S."/>
            <person name="Murphy L.D."/>
            <person name="Oliver S."/>
            <person name="Osborne J."/>
            <person name="Quail M.A."/>
            <person name="Rajandream M.A."/>
            <person name="Rogers J."/>
            <person name="Rutter S."/>
            <person name="Seeger K."/>
            <person name="Skelton S."/>
            <person name="Squares S."/>
            <person name="Squares R."/>
            <person name="Sulston J.E."/>
            <person name="Taylor K."/>
            <person name="Whitehead S."/>
            <person name="Barrell B.G."/>
        </authorList>
    </citation>
    <scope>NUCLEOTIDE SEQUENCE [LARGE SCALE GENOMIC DNA]</scope>
    <source>
        <strain>ATCC 25618 / H37Rv</strain>
    </source>
</reference>
<reference key="2">
    <citation type="journal article" date="2011" name="Mol. Cell. Proteomics">
        <title>Proteogenomic analysis of Mycobacterium tuberculosis by high resolution mass spectrometry.</title>
        <authorList>
            <person name="Kelkar D.S."/>
            <person name="Kumar D."/>
            <person name="Kumar P."/>
            <person name="Balakrishnan L."/>
            <person name="Muthusamy B."/>
            <person name="Yadav A.K."/>
            <person name="Shrivastava P."/>
            <person name="Marimuthu A."/>
            <person name="Anand S."/>
            <person name="Sundaram H."/>
            <person name="Kingsbury R."/>
            <person name="Harsha H.C."/>
            <person name="Nair B."/>
            <person name="Prasad T.S."/>
            <person name="Chauhan D.S."/>
            <person name="Katoch K."/>
            <person name="Katoch V.M."/>
            <person name="Kumar P."/>
            <person name="Chaerkady R."/>
            <person name="Ramachandran S."/>
            <person name="Dash D."/>
            <person name="Pandey A."/>
        </authorList>
    </citation>
    <scope>IDENTIFICATION BY MASS SPECTROMETRY [LARGE SCALE ANALYSIS]</scope>
    <source>
        <strain>ATCC 25618 / H37Rv</strain>
    </source>
</reference>
<evidence type="ECO:0000250" key="1"/>
<evidence type="ECO:0000255" key="2"/>
<evidence type="ECO:0000305" key="3"/>
<gene>
    <name type="primary">nuoF</name>
    <name type="ordered locus">Rv3150</name>
    <name type="ORF">MTCY03A2.08c</name>
</gene>
<proteinExistence type="evidence at protein level"/>
<protein>
    <recommendedName>
        <fullName>NADH-quinone oxidoreductase subunit F</fullName>
        <ecNumber>7.1.1.-</ecNumber>
    </recommendedName>
    <alternativeName>
        <fullName>NADH dehydrogenase I subunit F</fullName>
    </alternativeName>
    <alternativeName>
        <fullName>NDH-1 subunit F</fullName>
    </alternativeName>
</protein>
<organism>
    <name type="scientific">Mycobacterium tuberculosis (strain ATCC 25618 / H37Rv)</name>
    <dbReference type="NCBI Taxonomy" id="83332"/>
    <lineage>
        <taxon>Bacteria</taxon>
        <taxon>Bacillati</taxon>
        <taxon>Actinomycetota</taxon>
        <taxon>Actinomycetes</taxon>
        <taxon>Mycobacteriales</taxon>
        <taxon>Mycobacteriaceae</taxon>
        <taxon>Mycobacterium</taxon>
        <taxon>Mycobacterium tuberculosis complex</taxon>
    </lineage>
</organism>
<accession>P9WIV7</accession>
<accession>L0TDA7</accession>
<accession>P65567</accession>
<accession>P95176</accession>
<sequence>MTTQATPLTPVISRHWDDPESWTLATYQRHDRYRGYQALQKALTMPPDDVISIVKDSGLRGRGGAGFATGTKWSFIPQGDTGAAAKPHYLVVNADESEPGTCKDIPLMLATPHVLIEGVIIAAYAIRAHHAFVYVRGEVVPVLRRLHNAVAEAYAAGFLGRNIGGSGFDLELVVHAGAGAYICGEETALLDSLEGRRGQPRLRPPFPAVAGLYGCPTVINNVETIASVPSIILGGIDWFRSMGSEKSPGFTLYSLSGHVTRPGQYEAPLGITLRELLDYAGGVRAGHRLKFWTPGGSSTPLLTDEHLDVPLDYEGVGAAGSMLGTKALEIFDETTCVVRAVRRWTEFYKHESCGKCTPCREGTFWLDKIYERLETGRGSHEDIDKLLDISDSILGKSFCALGDGAASPVMSSIKHFRDEYLAHVEGGGCPFDPRDSMLVANGVDA</sequence>
<keyword id="KW-0004">4Fe-4S</keyword>
<keyword id="KW-0285">Flavoprotein</keyword>
<keyword id="KW-0288">FMN</keyword>
<keyword id="KW-0408">Iron</keyword>
<keyword id="KW-0411">Iron-sulfur</keyword>
<keyword id="KW-0479">Metal-binding</keyword>
<keyword id="KW-0520">NAD</keyword>
<keyword id="KW-0874">Quinone</keyword>
<keyword id="KW-1185">Reference proteome</keyword>
<keyword id="KW-1278">Translocase</keyword>
<comment type="function">
    <text evidence="1">NDH-1 shuttles electrons from NADH, via FMN and iron-sulfur (Fe-S) centers, to quinones in the respiratory chain. The immediate electron acceptor for the enzyme in this species is believed to be menaquinone. Couples the redox reaction to proton translocation (for every two electrons transferred, four hydrogen ions are translocated across the cytoplasmic membrane), and thus conserves the redox energy in a proton gradient (By similarity).</text>
</comment>
<comment type="catalytic activity">
    <reaction>
        <text>a quinone + NADH + 5 H(+)(in) = a quinol + NAD(+) + 4 H(+)(out)</text>
        <dbReference type="Rhea" id="RHEA:57888"/>
        <dbReference type="ChEBI" id="CHEBI:15378"/>
        <dbReference type="ChEBI" id="CHEBI:24646"/>
        <dbReference type="ChEBI" id="CHEBI:57540"/>
        <dbReference type="ChEBI" id="CHEBI:57945"/>
        <dbReference type="ChEBI" id="CHEBI:132124"/>
    </reaction>
</comment>
<comment type="cofactor">
    <cofactor evidence="3">
        <name>FMN</name>
        <dbReference type="ChEBI" id="CHEBI:58210"/>
    </cofactor>
    <text evidence="3">Binds 1 FMN.</text>
</comment>
<comment type="cofactor">
    <cofactor evidence="3">
        <name>[4Fe-4S] cluster</name>
        <dbReference type="ChEBI" id="CHEBI:49883"/>
    </cofactor>
    <text evidence="3">Binds 1 [4Fe-4S] cluster.</text>
</comment>
<comment type="similarity">
    <text evidence="3">Belongs to the complex I 51 kDa subunit family.</text>
</comment>
<feature type="chain" id="PRO_0000118574" description="NADH-quinone oxidoreductase subunit F">
    <location>
        <begin position="1"/>
        <end position="445"/>
    </location>
</feature>
<feature type="binding site" evidence="1">
    <location>
        <begin position="61"/>
        <end position="70"/>
    </location>
    <ligand>
        <name>NAD(+)</name>
        <dbReference type="ChEBI" id="CHEBI:57540"/>
    </ligand>
</feature>
<feature type="binding site" evidence="1">
    <location>
        <begin position="177"/>
        <end position="224"/>
    </location>
    <ligand>
        <name>FMN</name>
        <dbReference type="ChEBI" id="CHEBI:58210"/>
    </ligand>
</feature>
<feature type="binding site" evidence="2">
    <location>
        <position position="353"/>
    </location>
    <ligand>
        <name>[4Fe-4S] cluster</name>
        <dbReference type="ChEBI" id="CHEBI:49883"/>
    </ligand>
</feature>
<feature type="binding site" evidence="2">
    <location>
        <position position="356"/>
    </location>
    <ligand>
        <name>[4Fe-4S] cluster</name>
        <dbReference type="ChEBI" id="CHEBI:49883"/>
    </ligand>
</feature>
<feature type="binding site" evidence="2">
    <location>
        <position position="359"/>
    </location>
    <ligand>
        <name>[4Fe-4S] cluster</name>
        <dbReference type="ChEBI" id="CHEBI:49883"/>
    </ligand>
</feature>
<feature type="binding site" evidence="2">
    <location>
        <position position="399"/>
    </location>
    <ligand>
        <name>[4Fe-4S] cluster</name>
        <dbReference type="ChEBI" id="CHEBI:49883"/>
    </ligand>
</feature>
<name>NUOF_MYCTU</name>